<evidence type="ECO:0000255" key="1">
    <source>
        <dbReference type="HAMAP-Rule" id="MF_01315"/>
    </source>
</evidence>
<evidence type="ECO:0000256" key="2">
    <source>
        <dbReference type="SAM" id="MobiDB-lite"/>
    </source>
</evidence>
<evidence type="ECO:0000305" key="3"/>
<comment type="function">
    <text evidence="1">Located at the top of the head of the 30S subunit, it contacts several helices of the 16S rRNA. In the 70S ribosome it contacts the 23S rRNA (bridge B1a) and protein L5 of the 50S subunit (bridge B1b), connecting the 2 subunits; these bridges are implicated in subunit movement. Contacts the tRNAs in the A and P-sites.</text>
</comment>
<comment type="subunit">
    <text evidence="1">Part of the 30S ribosomal subunit. Forms a loose heterodimer with protein S19. Forms two bridges to the 50S subunit in the 70S ribosome.</text>
</comment>
<comment type="similarity">
    <text evidence="1">Belongs to the universal ribosomal protein uS13 family.</text>
</comment>
<gene>
    <name evidence="1" type="primary">rpsM</name>
    <name type="ordered locus">SPCG_0241</name>
</gene>
<sequence length="121" mass="13422">MARIAGVDIPNDKRVVISLTYVYGIGLATSKKILAAAGISEDVRVRDLTSDQEDAIRREVDAIKVEGDLRREVNLNIKRLMEIGSYRGIRHRRGLPVRGQNTKNNARTRKGKAVAIAGKKK</sequence>
<protein>
    <recommendedName>
        <fullName evidence="1">Small ribosomal subunit protein uS13</fullName>
    </recommendedName>
    <alternativeName>
        <fullName evidence="3">30S ribosomal protein S13</fullName>
    </alternativeName>
</protein>
<name>RS13_STRPS</name>
<reference key="1">
    <citation type="journal article" date="2009" name="BMC Genomics">
        <title>Genome evolution driven by host adaptations results in a more virulent and antimicrobial-resistant Streptococcus pneumoniae serotype 14.</title>
        <authorList>
            <person name="Ding F."/>
            <person name="Tang P."/>
            <person name="Hsu M.-H."/>
            <person name="Cui P."/>
            <person name="Hu S."/>
            <person name="Yu J."/>
            <person name="Chiu C.-H."/>
        </authorList>
    </citation>
    <scope>NUCLEOTIDE SEQUENCE [LARGE SCALE GENOMIC DNA]</scope>
    <source>
        <strain>CGSP14</strain>
    </source>
</reference>
<organism>
    <name type="scientific">Streptococcus pneumoniae (strain CGSP14)</name>
    <dbReference type="NCBI Taxonomy" id="516950"/>
    <lineage>
        <taxon>Bacteria</taxon>
        <taxon>Bacillati</taxon>
        <taxon>Bacillota</taxon>
        <taxon>Bacilli</taxon>
        <taxon>Lactobacillales</taxon>
        <taxon>Streptococcaceae</taxon>
        <taxon>Streptococcus</taxon>
    </lineage>
</organism>
<feature type="chain" id="PRO_1000141317" description="Small ribosomal subunit protein uS13">
    <location>
        <begin position="1"/>
        <end position="121"/>
    </location>
</feature>
<feature type="region of interest" description="Disordered" evidence="2">
    <location>
        <begin position="96"/>
        <end position="121"/>
    </location>
</feature>
<feature type="compositionally biased region" description="Basic residues" evidence="2">
    <location>
        <begin position="106"/>
        <end position="121"/>
    </location>
</feature>
<keyword id="KW-0687">Ribonucleoprotein</keyword>
<keyword id="KW-0689">Ribosomal protein</keyword>
<keyword id="KW-0694">RNA-binding</keyword>
<keyword id="KW-0699">rRNA-binding</keyword>
<keyword id="KW-0820">tRNA-binding</keyword>
<accession>B2IS65</accession>
<dbReference type="EMBL" id="CP001033">
    <property type="protein sequence ID" value="ACB89493.1"/>
    <property type="molecule type" value="Genomic_DNA"/>
</dbReference>
<dbReference type="RefSeq" id="WP_000090781.1">
    <property type="nucleotide sequence ID" value="NC_010582.1"/>
</dbReference>
<dbReference type="SMR" id="B2IS65"/>
<dbReference type="GeneID" id="93738981"/>
<dbReference type="KEGG" id="spw:SPCG_0241"/>
<dbReference type="HOGENOM" id="CLU_103849_1_1_9"/>
<dbReference type="GO" id="GO:0005829">
    <property type="term" value="C:cytosol"/>
    <property type="evidence" value="ECO:0007669"/>
    <property type="project" value="TreeGrafter"/>
</dbReference>
<dbReference type="GO" id="GO:0015935">
    <property type="term" value="C:small ribosomal subunit"/>
    <property type="evidence" value="ECO:0007669"/>
    <property type="project" value="TreeGrafter"/>
</dbReference>
<dbReference type="GO" id="GO:0019843">
    <property type="term" value="F:rRNA binding"/>
    <property type="evidence" value="ECO:0007669"/>
    <property type="project" value="UniProtKB-UniRule"/>
</dbReference>
<dbReference type="GO" id="GO:0003735">
    <property type="term" value="F:structural constituent of ribosome"/>
    <property type="evidence" value="ECO:0007669"/>
    <property type="project" value="InterPro"/>
</dbReference>
<dbReference type="GO" id="GO:0000049">
    <property type="term" value="F:tRNA binding"/>
    <property type="evidence" value="ECO:0007669"/>
    <property type="project" value="UniProtKB-UniRule"/>
</dbReference>
<dbReference type="GO" id="GO:0006412">
    <property type="term" value="P:translation"/>
    <property type="evidence" value="ECO:0007669"/>
    <property type="project" value="UniProtKB-UniRule"/>
</dbReference>
<dbReference type="FunFam" id="1.10.8.50:FF:000001">
    <property type="entry name" value="30S ribosomal protein S13"/>
    <property type="match status" value="1"/>
</dbReference>
<dbReference type="FunFam" id="4.10.910.10:FF:000001">
    <property type="entry name" value="30S ribosomal protein S13"/>
    <property type="match status" value="1"/>
</dbReference>
<dbReference type="Gene3D" id="1.10.8.50">
    <property type="match status" value="1"/>
</dbReference>
<dbReference type="Gene3D" id="4.10.910.10">
    <property type="entry name" value="30s ribosomal protein s13, domain 2"/>
    <property type="match status" value="1"/>
</dbReference>
<dbReference type="HAMAP" id="MF_01315">
    <property type="entry name" value="Ribosomal_uS13"/>
    <property type="match status" value="1"/>
</dbReference>
<dbReference type="InterPro" id="IPR027437">
    <property type="entry name" value="Rbsml_uS13_C"/>
</dbReference>
<dbReference type="InterPro" id="IPR001892">
    <property type="entry name" value="Ribosomal_uS13"/>
</dbReference>
<dbReference type="InterPro" id="IPR010979">
    <property type="entry name" value="Ribosomal_uS13-like_H2TH"/>
</dbReference>
<dbReference type="InterPro" id="IPR019980">
    <property type="entry name" value="Ribosomal_uS13_bac-type"/>
</dbReference>
<dbReference type="InterPro" id="IPR018269">
    <property type="entry name" value="Ribosomal_uS13_CS"/>
</dbReference>
<dbReference type="NCBIfam" id="TIGR03631">
    <property type="entry name" value="uS13_bact"/>
    <property type="match status" value="1"/>
</dbReference>
<dbReference type="PANTHER" id="PTHR10871">
    <property type="entry name" value="30S RIBOSOMAL PROTEIN S13/40S RIBOSOMAL PROTEIN S18"/>
    <property type="match status" value="1"/>
</dbReference>
<dbReference type="PANTHER" id="PTHR10871:SF1">
    <property type="entry name" value="SMALL RIBOSOMAL SUBUNIT PROTEIN US13M"/>
    <property type="match status" value="1"/>
</dbReference>
<dbReference type="Pfam" id="PF00416">
    <property type="entry name" value="Ribosomal_S13"/>
    <property type="match status" value="1"/>
</dbReference>
<dbReference type="PIRSF" id="PIRSF002134">
    <property type="entry name" value="Ribosomal_S13"/>
    <property type="match status" value="1"/>
</dbReference>
<dbReference type="SUPFAM" id="SSF46946">
    <property type="entry name" value="S13-like H2TH domain"/>
    <property type="match status" value="1"/>
</dbReference>
<dbReference type="PROSITE" id="PS00646">
    <property type="entry name" value="RIBOSOMAL_S13_1"/>
    <property type="match status" value="1"/>
</dbReference>
<dbReference type="PROSITE" id="PS50159">
    <property type="entry name" value="RIBOSOMAL_S13_2"/>
    <property type="match status" value="1"/>
</dbReference>
<proteinExistence type="inferred from homology"/>